<organismHost>
    <name type="scientific">Homo sapiens</name>
    <name type="common">Human</name>
    <dbReference type="NCBI Taxonomy" id="9606"/>
</organismHost>
<organism>
    <name type="scientific">Vaccinia virus (strain Copenhagen)</name>
    <name type="common">VACV</name>
    <dbReference type="NCBI Taxonomy" id="10249"/>
    <lineage>
        <taxon>Viruses</taxon>
        <taxon>Varidnaviria</taxon>
        <taxon>Bamfordvirae</taxon>
        <taxon>Nucleocytoviricota</taxon>
        <taxon>Pokkesviricetes</taxon>
        <taxon>Chitovirales</taxon>
        <taxon>Poxviridae</taxon>
        <taxon>Chordopoxvirinae</taxon>
        <taxon>Orthopoxvirus</taxon>
        <taxon>Vaccinia virus</taxon>
    </lineage>
</organism>
<proteinExistence type="inferred from homology"/>
<comment type="similarity">
    <text evidence="1">Belongs to the poxviridae A49 protein family.</text>
</comment>
<feature type="chain" id="PRO_0000099342" description="Protein A49">
    <location>
        <begin position="1"/>
        <end position="162"/>
    </location>
</feature>
<name>A49_VACCC</name>
<gene>
    <name type="ORF">A49R</name>
</gene>
<protein>
    <recommendedName>
        <fullName>Protein A49</fullName>
    </recommendedName>
</protein>
<keyword id="KW-1185">Reference proteome</keyword>
<evidence type="ECO:0000305" key="1"/>
<dbReference type="EMBL" id="M35027">
    <property type="protein sequence ID" value="AAA48181.1"/>
    <property type="molecule type" value="Genomic_DNA"/>
</dbReference>
<dbReference type="PIR" id="F42522">
    <property type="entry name" value="F42522"/>
</dbReference>
<dbReference type="SMR" id="P21068"/>
<dbReference type="Proteomes" id="UP000008269">
    <property type="component" value="Segment"/>
</dbReference>
<dbReference type="GO" id="GO:0030430">
    <property type="term" value="C:host cell cytoplasm"/>
    <property type="evidence" value="ECO:0000314"/>
    <property type="project" value="UniProtKB"/>
</dbReference>
<dbReference type="GO" id="GO:0042025">
    <property type="term" value="C:host cell nucleus"/>
    <property type="evidence" value="ECO:0000314"/>
    <property type="project" value="UniProtKB"/>
</dbReference>
<dbReference type="GO" id="GO:0085034">
    <property type="term" value="P:symbiont-mediated suppression of host NF-kappaB cascade"/>
    <property type="evidence" value="ECO:0000314"/>
    <property type="project" value="UniProtKB"/>
</dbReference>
<dbReference type="InterPro" id="IPR009473">
    <property type="entry name" value="Orthopox_A49"/>
</dbReference>
<dbReference type="Pfam" id="PF06489">
    <property type="entry name" value="Orthopox_A49R"/>
    <property type="match status" value="1"/>
</dbReference>
<sequence length="162" mass="18753">MDEAYYSGNLESVLGYVSDMHTELASISQLVIAKIETIDNDILNKDIVNFIMCRSNLDNPFISFLDTVYTIIDQENYQTELINSLDDNEIIDCIVNKFMSFYKDNLENIVDAIITLKYIMNNPDFKTTYAEVLGSRIADIDIKQVIRKNILQLSNDIRERYL</sequence>
<accession>P21068</accession>
<reference key="1">
    <citation type="journal article" date="1990" name="Virology">
        <title>The complete DNA sequence of vaccinia virus.</title>
        <authorList>
            <person name="Goebel S.J."/>
            <person name="Johnson G.P."/>
            <person name="Perkus M.E."/>
            <person name="Davis S.W."/>
            <person name="Winslow J.P."/>
            <person name="Paoletti E."/>
        </authorList>
    </citation>
    <scope>NUCLEOTIDE SEQUENCE [LARGE SCALE GENOMIC DNA]</scope>
</reference>
<reference key="2">
    <citation type="journal article" date="1990" name="Virology">
        <title>Appendix to 'The complete DNA sequence of vaccinia virus'.</title>
        <authorList>
            <person name="Goebel S.J."/>
            <person name="Johnson G.P."/>
            <person name="Perkus M.E."/>
            <person name="Davis S.W."/>
            <person name="Winslow J.P."/>
            <person name="Paoletti E."/>
        </authorList>
    </citation>
    <scope>NUCLEOTIDE SEQUENCE [LARGE SCALE GENOMIC DNA]</scope>
</reference>